<gene>
    <name evidence="1" type="primary">panB</name>
    <name type="ordered locus">RALTA_A2559</name>
</gene>
<proteinExistence type="inferred from homology"/>
<feature type="chain" id="PRO_1000096959" description="3-methyl-2-oxobutanoate hydroxymethyltransferase">
    <location>
        <begin position="1"/>
        <end position="273"/>
    </location>
</feature>
<feature type="active site" description="Proton acceptor" evidence="1">
    <location>
        <position position="189"/>
    </location>
</feature>
<feature type="binding site" evidence="1">
    <location>
        <begin position="53"/>
        <end position="54"/>
    </location>
    <ligand>
        <name>3-methyl-2-oxobutanoate</name>
        <dbReference type="ChEBI" id="CHEBI:11851"/>
    </ligand>
</feature>
<feature type="binding site" evidence="1">
    <location>
        <position position="53"/>
    </location>
    <ligand>
        <name>Mg(2+)</name>
        <dbReference type="ChEBI" id="CHEBI:18420"/>
    </ligand>
</feature>
<feature type="binding site" evidence="1">
    <location>
        <position position="92"/>
    </location>
    <ligand>
        <name>3-methyl-2-oxobutanoate</name>
        <dbReference type="ChEBI" id="CHEBI:11851"/>
    </ligand>
</feature>
<feature type="binding site" evidence="1">
    <location>
        <position position="92"/>
    </location>
    <ligand>
        <name>Mg(2+)</name>
        <dbReference type="ChEBI" id="CHEBI:18420"/>
    </ligand>
</feature>
<feature type="binding site" evidence="1">
    <location>
        <position position="120"/>
    </location>
    <ligand>
        <name>3-methyl-2-oxobutanoate</name>
        <dbReference type="ChEBI" id="CHEBI:11851"/>
    </ligand>
</feature>
<feature type="binding site" evidence="1">
    <location>
        <position position="122"/>
    </location>
    <ligand>
        <name>Mg(2+)</name>
        <dbReference type="ChEBI" id="CHEBI:18420"/>
    </ligand>
</feature>
<sequence length="273" mass="28671">MSYLLDPSRKTITIPKLQAMRDAGEKIAMLTAYDSSFAALLDYCGVEMILVGDSLGNVMQGQQTTLPVTLEQMAYHTECAARGNQTALLLTDLPFGTYPTPEAAFASAVTLMKAGAQMVKLEGGDWLAPIVKFLVERSIPVCAHIGLTPQSVHALGGFKVQGKTDAGAAQLRRDALALQAAGAQVVLMEAVPAALAGEITQSLAVPTIGIGAGADCSGQVLVLQDMLNIYPGRKAKFVRNFMDGQPSIEAAVRAYVAAVKDGSFPAAEHTFSA</sequence>
<dbReference type="EC" id="2.1.2.11" evidence="1"/>
<dbReference type="EMBL" id="CU633749">
    <property type="protein sequence ID" value="CAQ70490.1"/>
    <property type="molecule type" value="Genomic_DNA"/>
</dbReference>
<dbReference type="RefSeq" id="WP_012353786.1">
    <property type="nucleotide sequence ID" value="NC_010528.1"/>
</dbReference>
<dbReference type="SMR" id="B3R6G5"/>
<dbReference type="GeneID" id="29761692"/>
<dbReference type="KEGG" id="cti:RALTA_A2559"/>
<dbReference type="eggNOG" id="COG0413">
    <property type="taxonomic scope" value="Bacteria"/>
</dbReference>
<dbReference type="HOGENOM" id="CLU_036645_1_0_4"/>
<dbReference type="BioCyc" id="CTAI977880:RALTA_RS12445-MONOMER"/>
<dbReference type="UniPathway" id="UPA00028">
    <property type="reaction ID" value="UER00003"/>
</dbReference>
<dbReference type="Proteomes" id="UP000001692">
    <property type="component" value="Chromosome 1"/>
</dbReference>
<dbReference type="GO" id="GO:0005737">
    <property type="term" value="C:cytoplasm"/>
    <property type="evidence" value="ECO:0007669"/>
    <property type="project" value="UniProtKB-SubCell"/>
</dbReference>
<dbReference type="GO" id="GO:0003864">
    <property type="term" value="F:3-methyl-2-oxobutanoate hydroxymethyltransferase activity"/>
    <property type="evidence" value="ECO:0007669"/>
    <property type="project" value="UniProtKB-UniRule"/>
</dbReference>
<dbReference type="GO" id="GO:0000287">
    <property type="term" value="F:magnesium ion binding"/>
    <property type="evidence" value="ECO:0007669"/>
    <property type="project" value="TreeGrafter"/>
</dbReference>
<dbReference type="GO" id="GO:0015940">
    <property type="term" value="P:pantothenate biosynthetic process"/>
    <property type="evidence" value="ECO:0007669"/>
    <property type="project" value="UniProtKB-UniRule"/>
</dbReference>
<dbReference type="CDD" id="cd06557">
    <property type="entry name" value="KPHMT-like"/>
    <property type="match status" value="1"/>
</dbReference>
<dbReference type="FunFam" id="3.20.20.60:FF:000003">
    <property type="entry name" value="3-methyl-2-oxobutanoate hydroxymethyltransferase"/>
    <property type="match status" value="1"/>
</dbReference>
<dbReference type="Gene3D" id="3.20.20.60">
    <property type="entry name" value="Phosphoenolpyruvate-binding domains"/>
    <property type="match status" value="1"/>
</dbReference>
<dbReference type="HAMAP" id="MF_00156">
    <property type="entry name" value="PanB"/>
    <property type="match status" value="1"/>
</dbReference>
<dbReference type="InterPro" id="IPR003700">
    <property type="entry name" value="Pantoate_hydroxy_MeTrfase"/>
</dbReference>
<dbReference type="InterPro" id="IPR015813">
    <property type="entry name" value="Pyrv/PenolPyrv_kinase-like_dom"/>
</dbReference>
<dbReference type="InterPro" id="IPR040442">
    <property type="entry name" value="Pyrv_kinase-like_dom_sf"/>
</dbReference>
<dbReference type="NCBIfam" id="TIGR00222">
    <property type="entry name" value="panB"/>
    <property type="match status" value="1"/>
</dbReference>
<dbReference type="NCBIfam" id="NF001452">
    <property type="entry name" value="PRK00311.1"/>
    <property type="match status" value="1"/>
</dbReference>
<dbReference type="PANTHER" id="PTHR20881">
    <property type="entry name" value="3-METHYL-2-OXOBUTANOATE HYDROXYMETHYLTRANSFERASE"/>
    <property type="match status" value="1"/>
</dbReference>
<dbReference type="PANTHER" id="PTHR20881:SF0">
    <property type="entry name" value="3-METHYL-2-OXOBUTANOATE HYDROXYMETHYLTRANSFERASE"/>
    <property type="match status" value="1"/>
</dbReference>
<dbReference type="Pfam" id="PF02548">
    <property type="entry name" value="Pantoate_transf"/>
    <property type="match status" value="1"/>
</dbReference>
<dbReference type="PIRSF" id="PIRSF000388">
    <property type="entry name" value="Pantoate_hydroxy_MeTrfase"/>
    <property type="match status" value="1"/>
</dbReference>
<dbReference type="SUPFAM" id="SSF51621">
    <property type="entry name" value="Phosphoenolpyruvate/pyruvate domain"/>
    <property type="match status" value="1"/>
</dbReference>
<organism>
    <name type="scientific">Cupriavidus taiwanensis (strain DSM 17343 / BCRC 17206 / CCUG 44338 / CIP 107171 / LMG 19424 / R1)</name>
    <name type="common">Ralstonia taiwanensis (strain LMG 19424)</name>
    <dbReference type="NCBI Taxonomy" id="977880"/>
    <lineage>
        <taxon>Bacteria</taxon>
        <taxon>Pseudomonadati</taxon>
        <taxon>Pseudomonadota</taxon>
        <taxon>Betaproteobacteria</taxon>
        <taxon>Burkholderiales</taxon>
        <taxon>Burkholderiaceae</taxon>
        <taxon>Cupriavidus</taxon>
    </lineage>
</organism>
<keyword id="KW-0963">Cytoplasm</keyword>
<keyword id="KW-0460">Magnesium</keyword>
<keyword id="KW-0479">Metal-binding</keyword>
<keyword id="KW-0566">Pantothenate biosynthesis</keyword>
<keyword id="KW-0808">Transferase</keyword>
<comment type="function">
    <text evidence="1">Catalyzes the reversible reaction in which hydroxymethyl group from 5,10-methylenetetrahydrofolate is transferred onto alpha-ketoisovalerate to form ketopantoate.</text>
</comment>
<comment type="catalytic activity">
    <reaction evidence="1">
        <text>3-methyl-2-oxobutanoate + (6R)-5,10-methylene-5,6,7,8-tetrahydrofolate + H2O = 2-dehydropantoate + (6S)-5,6,7,8-tetrahydrofolate</text>
        <dbReference type="Rhea" id="RHEA:11824"/>
        <dbReference type="ChEBI" id="CHEBI:11561"/>
        <dbReference type="ChEBI" id="CHEBI:11851"/>
        <dbReference type="ChEBI" id="CHEBI:15377"/>
        <dbReference type="ChEBI" id="CHEBI:15636"/>
        <dbReference type="ChEBI" id="CHEBI:57453"/>
        <dbReference type="EC" id="2.1.2.11"/>
    </reaction>
</comment>
<comment type="cofactor">
    <cofactor evidence="1">
        <name>Mg(2+)</name>
        <dbReference type="ChEBI" id="CHEBI:18420"/>
    </cofactor>
    <text evidence="1">Binds 1 Mg(2+) ion per subunit.</text>
</comment>
<comment type="pathway">
    <text evidence="1">Cofactor biosynthesis; (R)-pantothenate biosynthesis; (R)-pantoate from 3-methyl-2-oxobutanoate: step 1/2.</text>
</comment>
<comment type="subunit">
    <text evidence="1">Homodecamer; pentamer of dimers.</text>
</comment>
<comment type="subcellular location">
    <subcellularLocation>
        <location evidence="1">Cytoplasm</location>
    </subcellularLocation>
</comment>
<comment type="similarity">
    <text evidence="1">Belongs to the PanB family.</text>
</comment>
<reference key="1">
    <citation type="journal article" date="2008" name="Genome Res.">
        <title>Genome sequence of the beta-rhizobium Cupriavidus taiwanensis and comparative genomics of rhizobia.</title>
        <authorList>
            <person name="Amadou C."/>
            <person name="Pascal G."/>
            <person name="Mangenot S."/>
            <person name="Glew M."/>
            <person name="Bontemps C."/>
            <person name="Capela D."/>
            <person name="Carrere S."/>
            <person name="Cruveiller S."/>
            <person name="Dossat C."/>
            <person name="Lajus A."/>
            <person name="Marchetti M."/>
            <person name="Poinsot V."/>
            <person name="Rouy Z."/>
            <person name="Servin B."/>
            <person name="Saad M."/>
            <person name="Schenowitz C."/>
            <person name="Barbe V."/>
            <person name="Batut J."/>
            <person name="Medigue C."/>
            <person name="Masson-Boivin C."/>
        </authorList>
    </citation>
    <scope>NUCLEOTIDE SEQUENCE [LARGE SCALE GENOMIC DNA]</scope>
    <source>
        <strain>DSM 17343 / BCRC 17206 / CCUG 44338 / CIP 107171 / LMG 19424 / R1</strain>
    </source>
</reference>
<evidence type="ECO:0000255" key="1">
    <source>
        <dbReference type="HAMAP-Rule" id="MF_00156"/>
    </source>
</evidence>
<accession>B3R6G5</accession>
<name>PANB_CUPTR</name>
<protein>
    <recommendedName>
        <fullName evidence="1">3-methyl-2-oxobutanoate hydroxymethyltransferase</fullName>
        <ecNumber evidence="1">2.1.2.11</ecNumber>
    </recommendedName>
    <alternativeName>
        <fullName evidence="1">Ketopantoate hydroxymethyltransferase</fullName>
        <shortName evidence="1">KPHMT</shortName>
    </alternativeName>
</protein>